<feature type="signal peptide" evidence="2">
    <location>
        <begin position="1"/>
        <end position="21"/>
    </location>
</feature>
<feature type="propeptide" id="PRO_0000462519" evidence="1">
    <location>
        <begin position="22"/>
        <end position="91"/>
    </location>
</feature>
<feature type="chain" id="PRO_0000462520" description="U11-myrmicitoxin-Ta1a" evidence="1">
    <location>
        <begin position="92"/>
        <end position="125"/>
    </location>
</feature>
<feature type="disulfide bond" evidence="1">
    <location>
        <begin position="101"/>
        <end position="124"/>
    </location>
</feature>
<keyword id="KW-0204">Cytolysis</keyword>
<keyword id="KW-1015">Disulfide bond</keyword>
<keyword id="KW-0406">Ion transport</keyword>
<keyword id="KW-0472">Membrane</keyword>
<keyword id="KW-0528">Neurotoxin</keyword>
<keyword id="KW-0964">Secreted</keyword>
<keyword id="KW-0732">Signal</keyword>
<keyword id="KW-1052">Target cell membrane</keyword>
<keyword id="KW-1053">Target membrane</keyword>
<keyword id="KW-0800">Toxin</keyword>
<keyword id="KW-0812">Transmembrane</keyword>
<keyword id="KW-0813">Transport</keyword>
<organism>
    <name type="scientific">Tetramorium africanum</name>
    <name type="common">Fierce ant</name>
    <name type="synonym">Macromischa africana</name>
    <dbReference type="NCBI Taxonomy" id="628533"/>
    <lineage>
        <taxon>Eukaryota</taxon>
        <taxon>Metazoa</taxon>
        <taxon>Ecdysozoa</taxon>
        <taxon>Arthropoda</taxon>
        <taxon>Hexapoda</taxon>
        <taxon>Insecta</taxon>
        <taxon>Pterygota</taxon>
        <taxon>Neoptera</taxon>
        <taxon>Endopterygota</taxon>
        <taxon>Hymenoptera</taxon>
        <taxon>Apocrita</taxon>
        <taxon>Aculeata</taxon>
        <taxon>Formicoidea</taxon>
        <taxon>Formicidae</taxon>
        <taxon>Myrmicinae</taxon>
        <taxon>Tetramorium</taxon>
    </lineage>
</organism>
<reference evidence="6" key="1">
    <citation type="journal article" date="2022" name="Insect Biochem. Mol. Biol.">
        <title>Venomics survey of six myrmicine ants provides insights into the molecular and structural diversity of their peptide toxins.</title>
        <authorList>
            <person name="Barasse V."/>
            <person name="Tene N."/>
            <person name="Klopp C."/>
            <person name="Paquet F."/>
            <person name="Tysklind N."/>
            <person name="Troispoux V."/>
            <person name="Lalaegue H."/>
            <person name="Orivel J."/>
            <person name="Lefranc B."/>
            <person name="Leprince J."/>
            <person name="Kenne M."/>
            <person name="Tindo M."/>
            <person name="Treilhou M."/>
            <person name="Touchard A."/>
            <person name="Bonnafe E."/>
        </authorList>
    </citation>
    <scope>NUCLEOTIDE SEQUENCE [MRNA]</scope>
    <source>
        <tissue>Venom gland</tissue>
    </source>
</reference>
<proteinExistence type="evidence at transcript level"/>
<accession>P0DY55</accession>
<name>TX11A_TETAF</name>
<protein>
    <recommendedName>
        <fullName evidence="3">U11-myrmicitoxin-Ta1a</fullName>
        <shortName evidence="3">U11-MYRTX-Ta1a</shortName>
    </recommendedName>
    <alternativeName>
        <fullName>u11Ta1a</fullName>
    </alternativeName>
</protein>
<dbReference type="EMBL" id="OW518837">
    <property type="protein sequence ID" value="CAH2618697.1"/>
    <property type="molecule type" value="mRNA"/>
</dbReference>
<comment type="function">
    <text evidence="1">Neurotoxin that causes irreversible rapid flaccid paralysis in blowflies and honeybees upon intrathoracic injection. Causes a quick and irreversible cytolytic effect (at 10 uM) indicating it possibly acts as a pore-forming peptide. Shows only weak effect on aphids (A.pisum) at high doses 24 hours post intrathoracic injection. In vitro, is not cytotoxic on the dipteran S2 Drosophila embryonic cell line.</text>
</comment>
<comment type="subcellular location">
    <subcellularLocation>
        <location evidence="1">Secreted</location>
    </subcellularLocation>
    <subcellularLocation>
        <location evidence="1">Target cell membrane</location>
    </subcellularLocation>
</comment>
<comment type="tissue specificity">
    <text evidence="5">Expressed by the venom gland.</text>
</comment>
<comment type="similarity">
    <text evidence="4">Belongs to the formicidae venom precursor-01 superfamily.</text>
</comment>
<sequence length="125" mass="13075">MKTVIFILGFAFVAILIPTNGESMADADAMADADANAMSDASAYPDASSDALALANPEARAEAMAEAMAKALGDAVAEAQARAMAAAYAAAGKEKDKLIECTKEMLLAAMDYAKHKIEKHLFKCK</sequence>
<evidence type="ECO:0000250" key="1">
    <source>
        <dbReference type="UniProtKB" id="A0A6M3Z554"/>
    </source>
</evidence>
<evidence type="ECO:0000255" key="2"/>
<evidence type="ECO:0000303" key="3">
    <source>
    </source>
</evidence>
<evidence type="ECO:0000305" key="4"/>
<evidence type="ECO:0000305" key="5">
    <source>
    </source>
</evidence>
<evidence type="ECO:0000312" key="6">
    <source>
        <dbReference type="EMBL" id="CAH2618697.1"/>
    </source>
</evidence>